<organism>
    <name type="scientific">Campylobacter jejuni subsp. doylei (strain ATCC BAA-1458 / RM4099 / 269.97)</name>
    <dbReference type="NCBI Taxonomy" id="360109"/>
    <lineage>
        <taxon>Bacteria</taxon>
        <taxon>Pseudomonadati</taxon>
        <taxon>Campylobacterota</taxon>
        <taxon>Epsilonproteobacteria</taxon>
        <taxon>Campylobacterales</taxon>
        <taxon>Campylobacteraceae</taxon>
        <taxon>Campylobacter</taxon>
    </lineage>
</organism>
<reference key="1">
    <citation type="submission" date="2007-07" db="EMBL/GenBank/DDBJ databases">
        <title>Complete genome sequence of Campylobacter jejuni subsp doylei 269.97 isolated from human blood.</title>
        <authorList>
            <person name="Fouts D.E."/>
            <person name="Mongodin E.F."/>
            <person name="Puiu D."/>
            <person name="Sebastian Y."/>
            <person name="Miller W.G."/>
            <person name="Mandrell R.E."/>
            <person name="Lastovica A.J."/>
            <person name="Nelson K.E."/>
        </authorList>
    </citation>
    <scope>NUCLEOTIDE SEQUENCE [LARGE SCALE GENOMIC DNA]</scope>
    <source>
        <strain>ATCC BAA-1458 / RM4099 / 269.97</strain>
    </source>
</reference>
<comment type="function">
    <text evidence="1">Bidirectionally degrades single-stranded DNA into large acid-insoluble oligonucleotides, which are then degraded further into small acid-soluble oligonucleotides.</text>
</comment>
<comment type="catalytic activity">
    <reaction evidence="1">
        <text>Exonucleolytic cleavage in either 5'- to 3'- or 3'- to 5'-direction to yield nucleoside 5'-phosphates.</text>
        <dbReference type="EC" id="3.1.11.6"/>
    </reaction>
</comment>
<comment type="subunit">
    <text evidence="1">Heterooligomer composed of large and small subunits.</text>
</comment>
<comment type="subcellular location">
    <subcellularLocation>
        <location evidence="1">Cytoplasm</location>
    </subcellularLocation>
</comment>
<comment type="similarity">
    <text evidence="1">Belongs to the XseA family.</text>
</comment>
<name>EX7L_CAMJD</name>
<protein>
    <recommendedName>
        <fullName evidence="1">Exodeoxyribonuclease 7 large subunit</fullName>
        <ecNumber evidence="1">3.1.11.6</ecNumber>
    </recommendedName>
    <alternativeName>
        <fullName evidence="1">Exodeoxyribonuclease VII large subunit</fullName>
        <shortName evidence="1">Exonuclease VII large subunit</shortName>
    </alternativeName>
</protein>
<feature type="chain" id="PRO_1000048765" description="Exodeoxyribonuclease 7 large subunit">
    <location>
        <begin position="1"/>
        <end position="387"/>
    </location>
</feature>
<gene>
    <name evidence="1" type="primary">xseA</name>
    <name type="ordered locus">JJD26997_1634</name>
</gene>
<sequence length="387" mass="44135">MTVSELNLKVKALLESYFENIILSGEISKITLHGSGHWYFDLKDEKSSISCAMFKGANLKVGFKPAVGDFLELCGSVSLYAESGRYQFIATSMKKAGFGDLEAQFLALKERLQKEGLFDPRFKKSLPKFPKKVGIITSKTSAALQDMLKLIHQKEYFLAKIYIFDALTQGNNAPFSLIQALRKADDMDLDVLIIARGGGSREDLFCFNDENLAREIFKAKTPIISAIGHEIDYVISDFVSDFRAPTPSAAIDTLFYSKLDIEQSLDLMEEKLIQLWNHKMQNYENLLLNLSKFFKFNSLPKIIDEKIKQSHNIEKQLNHLLANQMRYNELKLDKLQNAYLQHENFFNKSKKFICIRKNGKIANLEDLKSDDIVILSSQISQKEAKIL</sequence>
<proteinExistence type="inferred from homology"/>
<dbReference type="EC" id="3.1.11.6" evidence="1"/>
<dbReference type="EMBL" id="CP000768">
    <property type="protein sequence ID" value="ABS43881.1"/>
    <property type="molecule type" value="Genomic_DNA"/>
</dbReference>
<dbReference type="SMR" id="A7H544"/>
<dbReference type="KEGG" id="cjd:JJD26997_1634"/>
<dbReference type="HOGENOM" id="CLU_023625_2_0_7"/>
<dbReference type="Proteomes" id="UP000002302">
    <property type="component" value="Chromosome"/>
</dbReference>
<dbReference type="GO" id="GO:0005737">
    <property type="term" value="C:cytoplasm"/>
    <property type="evidence" value="ECO:0007669"/>
    <property type="project" value="UniProtKB-SubCell"/>
</dbReference>
<dbReference type="GO" id="GO:0009318">
    <property type="term" value="C:exodeoxyribonuclease VII complex"/>
    <property type="evidence" value="ECO:0007669"/>
    <property type="project" value="InterPro"/>
</dbReference>
<dbReference type="GO" id="GO:0008855">
    <property type="term" value="F:exodeoxyribonuclease VII activity"/>
    <property type="evidence" value="ECO:0007669"/>
    <property type="project" value="UniProtKB-UniRule"/>
</dbReference>
<dbReference type="GO" id="GO:0003676">
    <property type="term" value="F:nucleic acid binding"/>
    <property type="evidence" value="ECO:0007669"/>
    <property type="project" value="InterPro"/>
</dbReference>
<dbReference type="GO" id="GO:0006308">
    <property type="term" value="P:DNA catabolic process"/>
    <property type="evidence" value="ECO:0007669"/>
    <property type="project" value="UniProtKB-UniRule"/>
</dbReference>
<dbReference type="CDD" id="cd04489">
    <property type="entry name" value="ExoVII_LU_OBF"/>
    <property type="match status" value="1"/>
</dbReference>
<dbReference type="Gene3D" id="2.40.50.1010">
    <property type="match status" value="1"/>
</dbReference>
<dbReference type="HAMAP" id="MF_00378">
    <property type="entry name" value="Exonuc_7_L"/>
    <property type="match status" value="1"/>
</dbReference>
<dbReference type="InterPro" id="IPR003753">
    <property type="entry name" value="Exonuc_VII_L"/>
</dbReference>
<dbReference type="InterPro" id="IPR020579">
    <property type="entry name" value="Exonuc_VII_lsu_C"/>
</dbReference>
<dbReference type="InterPro" id="IPR025824">
    <property type="entry name" value="OB-fold_nuc-bd_dom"/>
</dbReference>
<dbReference type="NCBIfam" id="TIGR00237">
    <property type="entry name" value="xseA"/>
    <property type="match status" value="1"/>
</dbReference>
<dbReference type="PANTHER" id="PTHR30008">
    <property type="entry name" value="EXODEOXYRIBONUCLEASE 7 LARGE SUBUNIT"/>
    <property type="match status" value="1"/>
</dbReference>
<dbReference type="PANTHER" id="PTHR30008:SF0">
    <property type="entry name" value="EXODEOXYRIBONUCLEASE 7 LARGE SUBUNIT"/>
    <property type="match status" value="1"/>
</dbReference>
<dbReference type="Pfam" id="PF02601">
    <property type="entry name" value="Exonuc_VII_L"/>
    <property type="match status" value="1"/>
</dbReference>
<dbReference type="Pfam" id="PF13742">
    <property type="entry name" value="tRNA_anti_2"/>
    <property type="match status" value="1"/>
</dbReference>
<evidence type="ECO:0000255" key="1">
    <source>
        <dbReference type="HAMAP-Rule" id="MF_00378"/>
    </source>
</evidence>
<accession>A7H544</accession>
<keyword id="KW-0963">Cytoplasm</keyword>
<keyword id="KW-0269">Exonuclease</keyword>
<keyword id="KW-0378">Hydrolase</keyword>
<keyword id="KW-0540">Nuclease</keyword>